<proteinExistence type="inferred from homology"/>
<accession>A1KQG0</accession>
<dbReference type="EC" id="2.3.1.287" evidence="3"/>
<dbReference type="EMBL" id="AM408590">
    <property type="protein sequence ID" value="CAL73878.1"/>
    <property type="molecule type" value="Genomic_DNA"/>
</dbReference>
<dbReference type="RefSeq" id="WP_011799379.1">
    <property type="nucleotide sequence ID" value="NC_008769.1"/>
</dbReference>
<dbReference type="SMR" id="A1KQG0"/>
<dbReference type="KEGG" id="mbb:BCG_3888c"/>
<dbReference type="HOGENOM" id="CLU_000022_31_5_11"/>
<dbReference type="Proteomes" id="UP000001472">
    <property type="component" value="Chromosome"/>
</dbReference>
<dbReference type="GO" id="GO:0005737">
    <property type="term" value="C:cytoplasm"/>
    <property type="evidence" value="ECO:0007669"/>
    <property type="project" value="TreeGrafter"/>
</dbReference>
<dbReference type="GO" id="GO:0005886">
    <property type="term" value="C:plasma membrane"/>
    <property type="evidence" value="ECO:0007669"/>
    <property type="project" value="TreeGrafter"/>
</dbReference>
<dbReference type="GO" id="GO:0004315">
    <property type="term" value="F:3-oxoacyl-[acyl-carrier-protein] synthase activity"/>
    <property type="evidence" value="ECO:0007669"/>
    <property type="project" value="InterPro"/>
</dbReference>
<dbReference type="GO" id="GO:0004312">
    <property type="term" value="F:fatty acid synthase activity"/>
    <property type="evidence" value="ECO:0007669"/>
    <property type="project" value="TreeGrafter"/>
</dbReference>
<dbReference type="GO" id="GO:0016491">
    <property type="term" value="F:oxidoreductase activity"/>
    <property type="evidence" value="ECO:0007669"/>
    <property type="project" value="InterPro"/>
</dbReference>
<dbReference type="GO" id="GO:0031177">
    <property type="term" value="F:phosphopantetheine binding"/>
    <property type="evidence" value="ECO:0007669"/>
    <property type="project" value="InterPro"/>
</dbReference>
<dbReference type="GO" id="GO:0071770">
    <property type="term" value="P:DIM/DIP cell wall layer assembly"/>
    <property type="evidence" value="ECO:0007669"/>
    <property type="project" value="TreeGrafter"/>
</dbReference>
<dbReference type="GO" id="GO:0006633">
    <property type="term" value="P:fatty acid biosynthetic process"/>
    <property type="evidence" value="ECO:0007669"/>
    <property type="project" value="UniProtKB-KW"/>
</dbReference>
<dbReference type="CDD" id="cd05195">
    <property type="entry name" value="enoyl_red"/>
    <property type="match status" value="1"/>
</dbReference>
<dbReference type="CDD" id="cd08955">
    <property type="entry name" value="KR_2_FAS_SDR_x"/>
    <property type="match status" value="1"/>
</dbReference>
<dbReference type="CDD" id="cd00833">
    <property type="entry name" value="PKS"/>
    <property type="match status" value="1"/>
</dbReference>
<dbReference type="FunFam" id="1.10.1200.10:FF:000014">
    <property type="entry name" value="Multifunctional mycocerosic acid synthase"/>
    <property type="match status" value="1"/>
</dbReference>
<dbReference type="FunFam" id="3.10.129.110:FF:000004">
    <property type="entry name" value="Multifunctional mycocerosic acid synthase"/>
    <property type="match status" value="1"/>
</dbReference>
<dbReference type="FunFam" id="3.40.50.720:FF:000416">
    <property type="entry name" value="Multifunctional mycocerosic acid synthase"/>
    <property type="match status" value="1"/>
</dbReference>
<dbReference type="FunFam" id="3.40.50.720:FF:000372">
    <property type="entry name" value="Mycocerosic acid synthase-like polyketide synthase"/>
    <property type="match status" value="1"/>
</dbReference>
<dbReference type="FunFam" id="3.30.70.250:FF:000003">
    <property type="entry name" value="Polyketide beta-ketoacyl synthase Pks3"/>
    <property type="match status" value="1"/>
</dbReference>
<dbReference type="FunFam" id="3.40.50.720:FF:000209">
    <property type="entry name" value="Polyketide synthase Pks12"/>
    <property type="match status" value="1"/>
</dbReference>
<dbReference type="FunFam" id="3.40.47.10:FF:000019">
    <property type="entry name" value="Polyketide synthase type I"/>
    <property type="match status" value="1"/>
</dbReference>
<dbReference type="Gene3D" id="3.40.47.10">
    <property type="match status" value="1"/>
</dbReference>
<dbReference type="Gene3D" id="1.10.1200.10">
    <property type="entry name" value="ACP-like"/>
    <property type="match status" value="1"/>
</dbReference>
<dbReference type="Gene3D" id="3.30.70.250">
    <property type="entry name" value="Malonyl-CoA ACP transacylase, ACP-binding"/>
    <property type="match status" value="1"/>
</dbReference>
<dbReference type="Gene3D" id="3.40.366.10">
    <property type="entry name" value="Malonyl-Coenzyme A Acyl Carrier Protein, domain 2"/>
    <property type="match status" value="1"/>
</dbReference>
<dbReference type="Gene3D" id="3.90.180.10">
    <property type="entry name" value="Medium-chain alcohol dehydrogenases, catalytic domain"/>
    <property type="match status" value="1"/>
</dbReference>
<dbReference type="Gene3D" id="3.40.50.720">
    <property type="entry name" value="NAD(P)-binding Rossmann-like Domain"/>
    <property type="match status" value="2"/>
</dbReference>
<dbReference type="Gene3D" id="3.10.129.110">
    <property type="entry name" value="Polyketide synthase dehydratase"/>
    <property type="match status" value="1"/>
</dbReference>
<dbReference type="InterPro" id="IPR001227">
    <property type="entry name" value="Ac_transferase_dom_sf"/>
</dbReference>
<dbReference type="InterPro" id="IPR036736">
    <property type="entry name" value="ACP-like_sf"/>
</dbReference>
<dbReference type="InterPro" id="IPR014043">
    <property type="entry name" value="Acyl_transferase_dom"/>
</dbReference>
<dbReference type="InterPro" id="IPR016035">
    <property type="entry name" value="Acyl_Trfase/lysoPLipase"/>
</dbReference>
<dbReference type="InterPro" id="IPR013149">
    <property type="entry name" value="ADH-like_C"/>
</dbReference>
<dbReference type="InterPro" id="IPR013154">
    <property type="entry name" value="ADH-like_N"/>
</dbReference>
<dbReference type="InterPro" id="IPR011032">
    <property type="entry name" value="GroES-like_sf"/>
</dbReference>
<dbReference type="InterPro" id="IPR018201">
    <property type="entry name" value="Ketoacyl_synth_AS"/>
</dbReference>
<dbReference type="InterPro" id="IPR014031">
    <property type="entry name" value="Ketoacyl_synth_C"/>
</dbReference>
<dbReference type="InterPro" id="IPR014030">
    <property type="entry name" value="Ketoacyl_synth_N"/>
</dbReference>
<dbReference type="InterPro" id="IPR016036">
    <property type="entry name" value="Malonyl_transacylase_ACP-bd"/>
</dbReference>
<dbReference type="InterPro" id="IPR053386">
    <property type="entry name" value="MBFA_synthase"/>
</dbReference>
<dbReference type="InterPro" id="IPR036291">
    <property type="entry name" value="NAD(P)-bd_dom_sf"/>
</dbReference>
<dbReference type="InterPro" id="IPR032821">
    <property type="entry name" value="PKS_assoc"/>
</dbReference>
<dbReference type="InterPro" id="IPR020841">
    <property type="entry name" value="PKS_Beta-ketoAc_synthase_dom"/>
</dbReference>
<dbReference type="InterPro" id="IPR042104">
    <property type="entry name" value="PKS_dehydratase_sf"/>
</dbReference>
<dbReference type="InterPro" id="IPR020807">
    <property type="entry name" value="PKS_DH"/>
</dbReference>
<dbReference type="InterPro" id="IPR049551">
    <property type="entry name" value="PKS_DH_C"/>
</dbReference>
<dbReference type="InterPro" id="IPR049552">
    <property type="entry name" value="PKS_DH_N"/>
</dbReference>
<dbReference type="InterPro" id="IPR020843">
    <property type="entry name" value="PKS_ER"/>
</dbReference>
<dbReference type="InterPro" id="IPR013968">
    <property type="entry name" value="PKS_KR"/>
</dbReference>
<dbReference type="InterPro" id="IPR049900">
    <property type="entry name" value="PKS_mFAS_DH"/>
</dbReference>
<dbReference type="InterPro" id="IPR050091">
    <property type="entry name" value="PKS_NRPS_Biosynth_Enz"/>
</dbReference>
<dbReference type="InterPro" id="IPR020806">
    <property type="entry name" value="PKS_PP-bd"/>
</dbReference>
<dbReference type="InterPro" id="IPR009081">
    <property type="entry name" value="PP-bd_ACP"/>
</dbReference>
<dbReference type="InterPro" id="IPR006162">
    <property type="entry name" value="Ppantetheine_attach_site"/>
</dbReference>
<dbReference type="InterPro" id="IPR016039">
    <property type="entry name" value="Thiolase-like"/>
</dbReference>
<dbReference type="NCBIfam" id="NF041183">
    <property type="entry name" value="Pks2_ls1_myc"/>
    <property type="match status" value="1"/>
</dbReference>
<dbReference type="PANTHER" id="PTHR43775">
    <property type="entry name" value="FATTY ACID SYNTHASE"/>
    <property type="match status" value="1"/>
</dbReference>
<dbReference type="PANTHER" id="PTHR43775:SF37">
    <property type="entry name" value="SI:DKEY-61P9.11"/>
    <property type="match status" value="1"/>
</dbReference>
<dbReference type="Pfam" id="PF00698">
    <property type="entry name" value="Acyl_transf_1"/>
    <property type="match status" value="1"/>
</dbReference>
<dbReference type="Pfam" id="PF08240">
    <property type="entry name" value="ADH_N"/>
    <property type="match status" value="1"/>
</dbReference>
<dbReference type="Pfam" id="PF00107">
    <property type="entry name" value="ADH_zinc_N"/>
    <property type="match status" value="1"/>
</dbReference>
<dbReference type="Pfam" id="PF16197">
    <property type="entry name" value="KAsynt_C_assoc"/>
    <property type="match status" value="1"/>
</dbReference>
<dbReference type="Pfam" id="PF00109">
    <property type="entry name" value="ketoacyl-synt"/>
    <property type="match status" value="1"/>
</dbReference>
<dbReference type="Pfam" id="PF02801">
    <property type="entry name" value="Ketoacyl-synt_C"/>
    <property type="match status" value="1"/>
</dbReference>
<dbReference type="Pfam" id="PF08659">
    <property type="entry name" value="KR"/>
    <property type="match status" value="1"/>
</dbReference>
<dbReference type="Pfam" id="PF21089">
    <property type="entry name" value="PKS_DH_N"/>
    <property type="match status" value="1"/>
</dbReference>
<dbReference type="Pfam" id="PF00550">
    <property type="entry name" value="PP-binding"/>
    <property type="match status" value="1"/>
</dbReference>
<dbReference type="Pfam" id="PF14765">
    <property type="entry name" value="PS-DH"/>
    <property type="match status" value="1"/>
</dbReference>
<dbReference type="SMART" id="SM00827">
    <property type="entry name" value="PKS_AT"/>
    <property type="match status" value="1"/>
</dbReference>
<dbReference type="SMART" id="SM00826">
    <property type="entry name" value="PKS_DH"/>
    <property type="match status" value="1"/>
</dbReference>
<dbReference type="SMART" id="SM00829">
    <property type="entry name" value="PKS_ER"/>
    <property type="match status" value="1"/>
</dbReference>
<dbReference type="SMART" id="SM00822">
    <property type="entry name" value="PKS_KR"/>
    <property type="match status" value="1"/>
</dbReference>
<dbReference type="SMART" id="SM00825">
    <property type="entry name" value="PKS_KS"/>
    <property type="match status" value="1"/>
</dbReference>
<dbReference type="SMART" id="SM00823">
    <property type="entry name" value="PKS_PP"/>
    <property type="match status" value="1"/>
</dbReference>
<dbReference type="SUPFAM" id="SSF47336">
    <property type="entry name" value="ACP-like"/>
    <property type="match status" value="1"/>
</dbReference>
<dbReference type="SUPFAM" id="SSF52151">
    <property type="entry name" value="FabD/lysophospholipase-like"/>
    <property type="match status" value="1"/>
</dbReference>
<dbReference type="SUPFAM" id="SSF50129">
    <property type="entry name" value="GroES-like"/>
    <property type="match status" value="1"/>
</dbReference>
<dbReference type="SUPFAM" id="SSF51735">
    <property type="entry name" value="NAD(P)-binding Rossmann-fold domains"/>
    <property type="match status" value="3"/>
</dbReference>
<dbReference type="SUPFAM" id="SSF55048">
    <property type="entry name" value="Probable ACP-binding domain of malonyl-CoA ACP transacylase"/>
    <property type="match status" value="1"/>
</dbReference>
<dbReference type="SUPFAM" id="SSF53901">
    <property type="entry name" value="Thiolase-like"/>
    <property type="match status" value="1"/>
</dbReference>
<dbReference type="PROSITE" id="PS50075">
    <property type="entry name" value="CARRIER"/>
    <property type="match status" value="1"/>
</dbReference>
<dbReference type="PROSITE" id="PS00606">
    <property type="entry name" value="KS3_1"/>
    <property type="match status" value="1"/>
</dbReference>
<dbReference type="PROSITE" id="PS52004">
    <property type="entry name" value="KS3_2"/>
    <property type="match status" value="1"/>
</dbReference>
<dbReference type="PROSITE" id="PS00012">
    <property type="entry name" value="PHOSPHOPANTETHEINE"/>
    <property type="match status" value="1"/>
</dbReference>
<dbReference type="PROSITE" id="PS52019">
    <property type="entry name" value="PKS_MFAS_DH"/>
    <property type="match status" value="1"/>
</dbReference>
<comment type="catalytic activity">
    <reaction evidence="3">
        <text>hexadecanoyl-[(hydroxy)phthioceranic acid synthase] + 7 (S)-methylmalonyl-CoA + 14 NADPH + 21 H(+) = C37-phthioceranyl-[(hydroxy)phthioceranic acid synthase] + 7 CO2 + 14 NADP(+) + 7 CoA + 7 H2O</text>
        <dbReference type="Rhea" id="RHEA:58908"/>
        <dbReference type="Rhea" id="RHEA-COMP:15244"/>
        <dbReference type="Rhea" id="RHEA-COMP:15246"/>
        <dbReference type="ChEBI" id="CHEBI:15377"/>
        <dbReference type="ChEBI" id="CHEBI:15378"/>
        <dbReference type="ChEBI" id="CHEBI:16526"/>
        <dbReference type="ChEBI" id="CHEBI:57287"/>
        <dbReference type="ChEBI" id="CHEBI:57327"/>
        <dbReference type="ChEBI" id="CHEBI:57783"/>
        <dbReference type="ChEBI" id="CHEBI:58349"/>
        <dbReference type="ChEBI" id="CHEBI:78483"/>
        <dbReference type="ChEBI" id="CHEBI:142473"/>
        <dbReference type="EC" id="2.3.1.287"/>
    </reaction>
</comment>
<comment type="catalytic activity">
    <reaction evidence="3">
        <text>hexadecanoyl-[(hydroxy)phthioceranic acid synthase] + 8 (S)-methylmalonyl-CoA + 16 NADPH + 24 H(+) = C40-phthioceranyl-[(hydroxy)phthioceranic acid synthase] + 8 CO2 + 16 NADP(+) + 8 CoA + 8 H2O</text>
        <dbReference type="Rhea" id="RHEA:58904"/>
        <dbReference type="Rhea" id="RHEA-COMP:15244"/>
        <dbReference type="Rhea" id="RHEA-COMP:15245"/>
        <dbReference type="ChEBI" id="CHEBI:15377"/>
        <dbReference type="ChEBI" id="CHEBI:15378"/>
        <dbReference type="ChEBI" id="CHEBI:16526"/>
        <dbReference type="ChEBI" id="CHEBI:57287"/>
        <dbReference type="ChEBI" id="CHEBI:57327"/>
        <dbReference type="ChEBI" id="CHEBI:57783"/>
        <dbReference type="ChEBI" id="CHEBI:58349"/>
        <dbReference type="ChEBI" id="CHEBI:78483"/>
        <dbReference type="ChEBI" id="CHEBI:142472"/>
        <dbReference type="EC" id="2.3.1.287"/>
    </reaction>
</comment>
<comment type="cofactor">
    <cofactor evidence="2">
        <name>pantetheine 4'-phosphate</name>
        <dbReference type="ChEBI" id="CHEBI:47942"/>
    </cofactor>
    <text evidence="2">Binds 1 phosphopantetheine covalently.</text>
</comment>
<comment type="miscellaneous">
    <text>In strain BCG, the sulfolipid-1 (SL-1) is not synthesized.</text>
</comment>
<protein>
    <recommendedName>
        <fullName evidence="3">Phthioceranic/hydroxyphthioceranic acid synthase</fullName>
        <ecNumber evidence="3">2.3.1.287</ecNumber>
    </recommendedName>
    <alternativeName>
        <fullName evidence="3">Polyketide synthase pks2</fullName>
    </alternativeName>
</protein>
<gene>
    <name type="primary">pks2</name>
    <name type="ordered locus">BCG_3888c</name>
</gene>
<reference key="1">
    <citation type="journal article" date="2007" name="Proc. Natl. Acad. Sci. U.S.A.">
        <title>Genome plasticity of BCG and impact on vaccine efficacy.</title>
        <authorList>
            <person name="Brosch R."/>
            <person name="Gordon S.V."/>
            <person name="Garnier T."/>
            <person name="Eiglmeier K."/>
            <person name="Frigui W."/>
            <person name="Valenti P."/>
            <person name="Dos Santos S."/>
            <person name="Duthoy S."/>
            <person name="Lacroix C."/>
            <person name="Garcia-Pelayo C."/>
            <person name="Inwald J.K."/>
            <person name="Golby P."/>
            <person name="Garcia J.N."/>
            <person name="Hewinson R.G."/>
            <person name="Behr M.A."/>
            <person name="Quail M.A."/>
            <person name="Churcher C."/>
            <person name="Barrell B.G."/>
            <person name="Parkhill J."/>
            <person name="Cole S.T."/>
        </authorList>
    </citation>
    <scope>NUCLEOTIDE SEQUENCE [LARGE SCALE GENOMIC DNA]</scope>
    <source>
        <strain>BCG / Pasteur 1173P2</strain>
    </source>
</reference>
<organism>
    <name type="scientific">Mycobacterium bovis (strain BCG / Pasteur 1173P2)</name>
    <dbReference type="NCBI Taxonomy" id="410289"/>
    <lineage>
        <taxon>Bacteria</taxon>
        <taxon>Bacillati</taxon>
        <taxon>Actinomycetota</taxon>
        <taxon>Actinomycetes</taxon>
        <taxon>Mycobacteriales</taxon>
        <taxon>Mycobacteriaceae</taxon>
        <taxon>Mycobacterium</taxon>
        <taxon>Mycobacterium tuberculosis complex</taxon>
    </lineage>
</organism>
<name>PHAS_MYCBP</name>
<sequence length="2126" mass="225734">MGLGSAASGTGADRGAWTLAEPRVTPVAVIGMACRLPGGIDSPELLWKALLRGDDLITEVPPDRWDCDEFYDPQPGVPGRTVCKWGGFLDNPADFDCEFFGIGEREAIAIDPQQRLLLETSWEAMEHAGLTQQTLAGSATGVFAGVTHGDYTMVAADAKQLEEPYGYLGNSFSMASGRVAYAMRLHGPAITVDTACSSGLTAVHMACRSLHEGESDVALAGGVALMLEPRKAAAGSALGMLSPTGRCRAFDVAADGFVSGEGCAVVVLKRLPDALADGDRILAVIRGTSANQDGHTVNIATPSQPAQVAAYRAALAAGGVDAATVGMVEAHGPGTPIGDPIEYASVSEVYGVDGPCALASVKTNFGHTQSTAGVLGLIKVVLALKHGVVPRNLHFTRLPDEIAGITTNLFVPEVTTPWPTNGRQVPRRAAVSSYGFSGTNVHAVVEQAPQTEAQPHAASTPPTGTPALFTLSASSADALRQTAQRLTDWIQQHADSLVLSDLAYTLARRRTHRSVRTAVIASSVDELIAGLGEVADGDTVYQPAVGQDDRGPVWLFSGQGSQWAAMGADLLTNESVFAATVAELEPLIAAESGFSVTEAMTAPETVTGIDRVQPTIFAMQVALAATMAAYGVRPGAVIGHSMGESAAAVVAGVLSAEDGVRVICRRSKLMATIAGSAAMASVELPALAVQSELTALGIDDVVVAVVTAPQSTVIAGGTESVRKLVDIWERRDVLARAVAVDVASHSPQVDPILDELIAALADLNPKAPEIPYYSATLFDPREAPACDARYWADNLRHTVRFSAAVRSALDDGYRVFAELSPHPLLTHAGDQIAGSVGMPVAALAGMRREQPLPLGLRRLLTDLHNAGAAVDFSVLCPQGRLVDAPLPAWSHRFLFYDREGVDNRSPGGSTVAVHPLLGAHVRLPEEPERHAWQADVGTATLPWLGDHRIHNVAALPGAAYCEMALSAARAVLGEQSEVRDMRFEAMLLLDDQTPVSTVATVTSPGVVDFAVEALQEGVGHHLRRASAVLQQVSGECEPPAYDMASLLEAHPCRVDGEDLRRQFDKHGVQYGPAFTGLAVAYVAEDATATMLAEVALPGSIRSQQGLYAIHPALLDACFQSVGAHPDSQSVGSGLLVPLGVRRVRAYAPVRTARYCYTRVTKVELVGVEADIDVLDAHGTVLLAVCGLRIGTGVSERDKHNRVLNERLLTIEWHQRELPEMDPSGAGKWLLISDCAASDVTATRLADAFREHSAACTTMRWPLHDDQLAAADQLRDQVGSDEFSGVVVLTGSNTGTPHQGSADRGAEYVRRLVGIARELSDLPGAVPRMYVVTRGAQRVLADDCVNLEQGGLRGLLRTIGAEHPHLRATQIDVDEQTGVEQLARQLLATSEEDETAWRDNEWYVARLCPTPLRPQERRTIVADHQQSGMRLQIRTPGDMQTIELAAFHRVPPGPGQIEVAVRASSVNFADVLIAFGRYPSFEGHLPQLGTDFAGVVTAVGPGVTDHKVGDHVGGMSPNGCWGTFVTCDARLAATLPPGLGDAQAAAVTTAHATAWYGLHELARIRAGDTVLIHSGTGGVGQAAIAIARAAGAEIFATAGTPQRRELLRNMGIEHVYDSRSIEFAEQIRRDTNGRGVDVVLNSVTGAAQLAGLKLLAFRGRFVEIGKRDIYGDTKLGLFPFRRNLSFYAVDLGLLSATHPEELRDLLGTVYRLTAAGELPMPQSTHYPLVEAATAIRVMGNAEHTGKLVLHIPQTGKSLVTLPPEQAQVFRPDGSYIITGGLGGLGLFLAEKMAAAGCGRIVLNSRTQPTQKMRETIEAIAAMGSEVVVECGDIAQPGTAERLVATAVATGLPVRGVLHAAAVVEDATLANITDELLARDWAPKVHGAWELHEATSGQPLDWFCLFSSAAALTGSPGQSAYSAANSWLDAFAHWRQAQGLPATAIAWGAWSDIGQLGWWSASPARASALEESNYTAITPDEGAYAFEALLRHNRVYTGYAPVIGAPWLVAFAERSRFFEVFSSSNGSGTSKFRVELNELPRDEWPARLRQLVAEQVSLILRRTVDPDRPLPEYGLDSLGALELRTRIETETGIRLAPKNVSATVRGLADHLYEQLAPDDAPAAALSSQ</sequence>
<keyword id="KW-0012">Acyltransferase</keyword>
<keyword id="KW-0275">Fatty acid biosynthesis</keyword>
<keyword id="KW-0276">Fatty acid metabolism</keyword>
<keyword id="KW-0444">Lipid biosynthesis</keyword>
<keyword id="KW-0443">Lipid metabolism</keyword>
<keyword id="KW-0511">Multifunctional enzyme</keyword>
<keyword id="KW-0521">NADP</keyword>
<keyword id="KW-0596">Phosphopantetheine</keyword>
<keyword id="KW-0597">Phosphoprotein</keyword>
<keyword id="KW-0808">Transferase</keyword>
<feature type="chain" id="PRO_0000329010" description="Phthioceranic/hydroxyphthioceranic acid synthase">
    <location>
        <begin position="1"/>
        <end position="2126"/>
    </location>
</feature>
<feature type="domain" description="Ketosynthase family 3 (KS3)" evidence="6">
    <location>
        <begin position="24"/>
        <end position="447"/>
    </location>
</feature>
<feature type="domain" description="PKS/mFAS DH" evidence="7">
    <location>
        <begin position="914"/>
        <end position="1198"/>
    </location>
</feature>
<feature type="domain" description="Carrier" evidence="5">
    <location>
        <begin position="2040"/>
        <end position="2126"/>
    </location>
</feature>
<feature type="region of interest" description="Linker domain (LD)" evidence="1">
    <location>
        <begin position="449"/>
        <end position="549"/>
    </location>
</feature>
<feature type="region of interest" description="Acyltransferase (AT)" evidence="1">
    <location>
        <begin position="550"/>
        <end position="849"/>
    </location>
</feature>
<feature type="region of interest" description="Dehydratase (DH)" evidence="1">
    <location>
        <begin position="909"/>
        <end position="1191"/>
    </location>
</feature>
<feature type="region of interest" description="N-terminal hotdog fold" evidence="7">
    <location>
        <begin position="914"/>
        <end position="1032"/>
    </location>
</feature>
<feature type="region of interest" description="C-terminal hotdog fold" evidence="7">
    <location>
        <begin position="1051"/>
        <end position="1198"/>
    </location>
</feature>
<feature type="region of interest" description="Pseudo beta-ketoacyl reductase (PsiKR)" evidence="1">
    <location>
        <begin position="1227"/>
        <end position="1398"/>
    </location>
</feature>
<feature type="region of interest" description="Enoylreductase (ER)" evidence="1">
    <location>
        <begin position="1426"/>
        <end position="1750"/>
    </location>
</feature>
<feature type="region of interest" description="Beta-ketoacyl reductase (KR)" evidence="1">
    <location>
        <begin position="1772"/>
        <end position="2019"/>
    </location>
</feature>
<feature type="active site" description="Acyl-thioester intermediate; for beta-ketoacyl synthase activity" evidence="6">
    <location>
        <position position="196"/>
    </location>
</feature>
<feature type="active site" description="For beta-ketoacyl synthase activity" evidence="6">
    <location>
        <position position="331"/>
    </location>
</feature>
<feature type="active site" description="For beta-ketoacyl synthase activity" evidence="6">
    <location>
        <position position="367"/>
    </location>
</feature>
<feature type="active site" description="Acyl-ester intermediate; for acyltransferase activity" evidence="1">
    <location>
        <position position="641"/>
    </location>
</feature>
<feature type="active site" description="Proton acceptor; for dehydratase activity" evidence="7">
    <location>
        <position position="947"/>
    </location>
</feature>
<feature type="active site" description="Proton donor; for dehydratase activity" evidence="7">
    <location>
        <position position="1115"/>
    </location>
</feature>
<feature type="binding site" evidence="4">
    <location>
        <begin position="1780"/>
        <end position="1783"/>
    </location>
    <ligand>
        <name>NADP(+)</name>
        <dbReference type="ChEBI" id="CHEBI:58349"/>
    </ligand>
</feature>
<feature type="binding site" evidence="4">
    <location>
        <begin position="1803"/>
        <end position="1806"/>
    </location>
    <ligand>
        <name>NADP(+)</name>
        <dbReference type="ChEBI" id="CHEBI:58349"/>
    </ligand>
</feature>
<feature type="binding site" evidence="4">
    <location>
        <begin position="1831"/>
        <end position="1832"/>
    </location>
    <ligand>
        <name>NADP(+)</name>
        <dbReference type="ChEBI" id="CHEBI:58349"/>
    </ligand>
</feature>
<feature type="binding site" evidence="4">
    <location>
        <begin position="1904"/>
        <end position="1905"/>
    </location>
    <ligand>
        <name>NADP(+)</name>
        <dbReference type="ChEBI" id="CHEBI:58349"/>
    </ligand>
</feature>
<feature type="modified residue" description="O-(pantetheine 4'-phosphoryl)serine" evidence="5">
    <location>
        <position position="2075"/>
    </location>
</feature>
<evidence type="ECO:0000250" key="1">
    <source>
        <dbReference type="UniProtKB" id="A0R1E8"/>
    </source>
</evidence>
<evidence type="ECO:0000250" key="2">
    <source>
        <dbReference type="UniProtKB" id="P96202"/>
    </source>
</evidence>
<evidence type="ECO:0000250" key="3">
    <source>
        <dbReference type="UniProtKB" id="P9WQE9"/>
    </source>
</evidence>
<evidence type="ECO:0000250" key="4">
    <source>
        <dbReference type="UniProtKB" id="Q03131"/>
    </source>
</evidence>
<evidence type="ECO:0000255" key="5">
    <source>
        <dbReference type="PROSITE-ProRule" id="PRU00258"/>
    </source>
</evidence>
<evidence type="ECO:0000255" key="6">
    <source>
        <dbReference type="PROSITE-ProRule" id="PRU01348"/>
    </source>
</evidence>
<evidence type="ECO:0000255" key="7">
    <source>
        <dbReference type="PROSITE-ProRule" id="PRU01363"/>
    </source>
</evidence>